<name>SURE_PROMT</name>
<accession>Q46JK0</accession>
<comment type="function">
    <text evidence="1">Nucleotidase that shows phosphatase activity on nucleoside 5'-monophosphates.</text>
</comment>
<comment type="catalytic activity">
    <reaction evidence="1">
        <text>a ribonucleoside 5'-phosphate + H2O = a ribonucleoside + phosphate</text>
        <dbReference type="Rhea" id="RHEA:12484"/>
        <dbReference type="ChEBI" id="CHEBI:15377"/>
        <dbReference type="ChEBI" id="CHEBI:18254"/>
        <dbReference type="ChEBI" id="CHEBI:43474"/>
        <dbReference type="ChEBI" id="CHEBI:58043"/>
        <dbReference type="EC" id="3.1.3.5"/>
    </reaction>
</comment>
<comment type="cofactor">
    <cofactor evidence="1">
        <name>a divalent metal cation</name>
        <dbReference type="ChEBI" id="CHEBI:60240"/>
    </cofactor>
    <text evidence="1">Binds 1 divalent metal cation per subunit.</text>
</comment>
<comment type="subcellular location">
    <subcellularLocation>
        <location evidence="1">Cytoplasm</location>
    </subcellularLocation>
</comment>
<comment type="similarity">
    <text evidence="1">Belongs to the SurE nucleotidase family.</text>
</comment>
<organism>
    <name type="scientific">Prochlorococcus marinus (strain NATL2A)</name>
    <dbReference type="NCBI Taxonomy" id="59920"/>
    <lineage>
        <taxon>Bacteria</taxon>
        <taxon>Bacillati</taxon>
        <taxon>Cyanobacteriota</taxon>
        <taxon>Cyanophyceae</taxon>
        <taxon>Synechococcales</taxon>
        <taxon>Prochlorococcaceae</taxon>
        <taxon>Prochlorococcus</taxon>
    </lineage>
</organism>
<proteinExistence type="inferred from homology"/>
<gene>
    <name evidence="1" type="primary">surE</name>
    <name type="ordered locus">PMN2A_0837</name>
</gene>
<sequence>MKPLKILISNDDGVFAEGIRTLATSAASRGHKVTVVCPDQERSATGHGLTLHSPIRAEKADELFGGGIKAWGCSGTPADCVKLALNELLDQKPDLILSGINHGPNLGTDIFCSGTVAAALEGTLDGIPSIAVSVASFQWKNFSFAGKLSLDIAEKAIQQNWPKNLLLNLNIPPCEEKEMGDLVWTRLSIRQYEEQFIRRVDPRGNTYFWMAGEAVKDLQSAGEGPKGWPSDVSQIALCSPSLTPIQPDLFWRGNLDDLPNLI</sequence>
<dbReference type="EC" id="3.1.3.5" evidence="1"/>
<dbReference type="EMBL" id="CP000095">
    <property type="protein sequence ID" value="AAZ58328.1"/>
    <property type="molecule type" value="Genomic_DNA"/>
</dbReference>
<dbReference type="RefSeq" id="WP_011294925.1">
    <property type="nucleotide sequence ID" value="NC_007335.2"/>
</dbReference>
<dbReference type="SMR" id="Q46JK0"/>
<dbReference type="STRING" id="59920.PMN2A_0837"/>
<dbReference type="KEGG" id="pmn:PMN2A_0837"/>
<dbReference type="HOGENOM" id="CLU_045192_1_3_3"/>
<dbReference type="OrthoDB" id="9780815at2"/>
<dbReference type="PhylomeDB" id="Q46JK0"/>
<dbReference type="Proteomes" id="UP000002535">
    <property type="component" value="Chromosome"/>
</dbReference>
<dbReference type="GO" id="GO:0005737">
    <property type="term" value="C:cytoplasm"/>
    <property type="evidence" value="ECO:0007669"/>
    <property type="project" value="UniProtKB-SubCell"/>
</dbReference>
<dbReference type="GO" id="GO:0008254">
    <property type="term" value="F:3'-nucleotidase activity"/>
    <property type="evidence" value="ECO:0007669"/>
    <property type="project" value="TreeGrafter"/>
</dbReference>
<dbReference type="GO" id="GO:0008253">
    <property type="term" value="F:5'-nucleotidase activity"/>
    <property type="evidence" value="ECO:0007669"/>
    <property type="project" value="UniProtKB-UniRule"/>
</dbReference>
<dbReference type="GO" id="GO:0004309">
    <property type="term" value="F:exopolyphosphatase activity"/>
    <property type="evidence" value="ECO:0007669"/>
    <property type="project" value="TreeGrafter"/>
</dbReference>
<dbReference type="GO" id="GO:0046872">
    <property type="term" value="F:metal ion binding"/>
    <property type="evidence" value="ECO:0007669"/>
    <property type="project" value="UniProtKB-UniRule"/>
</dbReference>
<dbReference type="GO" id="GO:0000166">
    <property type="term" value="F:nucleotide binding"/>
    <property type="evidence" value="ECO:0007669"/>
    <property type="project" value="UniProtKB-KW"/>
</dbReference>
<dbReference type="Gene3D" id="3.40.1210.10">
    <property type="entry name" value="Survival protein SurE-like phosphatase/nucleotidase"/>
    <property type="match status" value="1"/>
</dbReference>
<dbReference type="HAMAP" id="MF_00060">
    <property type="entry name" value="SurE"/>
    <property type="match status" value="1"/>
</dbReference>
<dbReference type="InterPro" id="IPR030048">
    <property type="entry name" value="SurE"/>
</dbReference>
<dbReference type="InterPro" id="IPR002828">
    <property type="entry name" value="SurE-like_Pase/nucleotidase"/>
</dbReference>
<dbReference type="InterPro" id="IPR036523">
    <property type="entry name" value="SurE-like_sf"/>
</dbReference>
<dbReference type="NCBIfam" id="NF001490">
    <property type="entry name" value="PRK00346.1-4"/>
    <property type="match status" value="1"/>
</dbReference>
<dbReference type="NCBIfam" id="NF001492">
    <property type="entry name" value="PRK00346.2-2"/>
    <property type="match status" value="1"/>
</dbReference>
<dbReference type="NCBIfam" id="TIGR00087">
    <property type="entry name" value="surE"/>
    <property type="match status" value="1"/>
</dbReference>
<dbReference type="PANTHER" id="PTHR30457">
    <property type="entry name" value="5'-NUCLEOTIDASE SURE"/>
    <property type="match status" value="1"/>
</dbReference>
<dbReference type="PANTHER" id="PTHR30457:SF12">
    <property type="entry name" value="5'_3'-NUCLEOTIDASE SURE"/>
    <property type="match status" value="1"/>
</dbReference>
<dbReference type="Pfam" id="PF01975">
    <property type="entry name" value="SurE"/>
    <property type="match status" value="1"/>
</dbReference>
<dbReference type="SUPFAM" id="SSF64167">
    <property type="entry name" value="SurE-like"/>
    <property type="match status" value="1"/>
</dbReference>
<protein>
    <recommendedName>
        <fullName evidence="1">5'-nucleotidase SurE</fullName>
        <ecNumber evidence="1">3.1.3.5</ecNumber>
    </recommendedName>
    <alternativeName>
        <fullName evidence="1">Nucleoside 5'-monophosphate phosphohydrolase</fullName>
    </alternativeName>
</protein>
<keyword id="KW-0963">Cytoplasm</keyword>
<keyword id="KW-0378">Hydrolase</keyword>
<keyword id="KW-0479">Metal-binding</keyword>
<keyword id="KW-0547">Nucleotide-binding</keyword>
<keyword id="KW-1185">Reference proteome</keyword>
<feature type="chain" id="PRO_0000235636" description="5'-nucleotidase SurE">
    <location>
        <begin position="1"/>
        <end position="262"/>
    </location>
</feature>
<feature type="binding site" evidence="1">
    <location>
        <position position="11"/>
    </location>
    <ligand>
        <name>a divalent metal cation</name>
        <dbReference type="ChEBI" id="CHEBI:60240"/>
    </ligand>
</feature>
<feature type="binding site" evidence="1">
    <location>
        <position position="12"/>
    </location>
    <ligand>
        <name>a divalent metal cation</name>
        <dbReference type="ChEBI" id="CHEBI:60240"/>
    </ligand>
</feature>
<feature type="binding site" evidence="1">
    <location>
        <position position="43"/>
    </location>
    <ligand>
        <name>a divalent metal cation</name>
        <dbReference type="ChEBI" id="CHEBI:60240"/>
    </ligand>
</feature>
<feature type="binding site" evidence="1">
    <location>
        <position position="101"/>
    </location>
    <ligand>
        <name>a divalent metal cation</name>
        <dbReference type="ChEBI" id="CHEBI:60240"/>
    </ligand>
</feature>
<reference key="1">
    <citation type="journal article" date="2007" name="PLoS Genet.">
        <title>Patterns and implications of gene gain and loss in the evolution of Prochlorococcus.</title>
        <authorList>
            <person name="Kettler G.C."/>
            <person name="Martiny A.C."/>
            <person name="Huang K."/>
            <person name="Zucker J."/>
            <person name="Coleman M.L."/>
            <person name="Rodrigue S."/>
            <person name="Chen F."/>
            <person name="Lapidus A."/>
            <person name="Ferriera S."/>
            <person name="Johnson J."/>
            <person name="Steglich C."/>
            <person name="Church G.M."/>
            <person name="Richardson P."/>
            <person name="Chisholm S.W."/>
        </authorList>
    </citation>
    <scope>NUCLEOTIDE SEQUENCE [LARGE SCALE GENOMIC DNA]</scope>
    <source>
        <strain>NATL2A</strain>
    </source>
</reference>
<evidence type="ECO:0000255" key="1">
    <source>
        <dbReference type="HAMAP-Rule" id="MF_00060"/>
    </source>
</evidence>